<protein>
    <recommendedName>
        <fullName>60 kDa heat shock protein, mitochondrial</fullName>
        <ecNumber evidence="2">5.6.1.7</ecNumber>
    </recommendedName>
    <alternativeName>
        <fullName>60 kDa chaperonin</fullName>
    </alternativeName>
    <alternativeName>
        <fullName>Chaperonin 60</fullName>
        <shortName>CPN60</shortName>
    </alternativeName>
    <alternativeName>
        <fullName>Heat shock protein 60</fullName>
        <shortName>HSP-60</shortName>
        <shortName>Hsp60</shortName>
    </alternativeName>
    <alternativeName>
        <fullName>Mitochondrial matrix protein P1</fullName>
    </alternativeName>
</protein>
<reference key="1">
    <citation type="journal article" date="1989" name="J. Biol. Chem.">
        <title>Molecular cloning of a Chinese hamster mitochondrial protein related to the 'chaperonin' family of bacterial and plant proteins.</title>
        <authorList>
            <person name="Picketts D.J."/>
            <person name="Mayanil C.S.K."/>
            <person name="Gupta R.S."/>
        </authorList>
    </citation>
    <scope>NUCLEOTIDE SEQUENCE [MRNA]</scope>
</reference>
<comment type="function">
    <text evidence="2">Chaperonin implicated in mitochondrial protein import and macromolecular assembly. Together with Hsp10, facilitates the correct folding of imported proteins. May also prevent misfolding and promote the refolding and proper assembly of unfolded polypeptides generated under stress conditions in the mitochondrial matrix. The functional units of these chaperonins consist of heptameric rings of the large subunit Hsp60, which function as a back-to-back double ring. In a cyclic reaction, Hsp60 ring complexes bind one unfolded substrate protein per ring, followed by the binding of ATP and association with 2 heptameric rings of the co-chaperonin Hsp10. This leads to sequestration of the substrate protein in the inner cavity of Hsp60 where, for a certain period of time, it can fold undisturbed by other cell components. Synchronous hydrolysis of ATP in all Hsp60 subunits results in the dissociation of the chaperonin rings and the release of ADP and the folded substrate protein.</text>
</comment>
<comment type="catalytic activity">
    <reaction evidence="2">
        <text>ATP + H2O + a folded polypeptide = ADP + phosphate + an unfolded polypeptide.</text>
        <dbReference type="EC" id="5.6.1.7"/>
    </reaction>
</comment>
<comment type="subunit">
    <text evidence="2 3">Homoheptamer arranged in a ring structure. The functional units of these chaperonins consist of heptameric rings of the large subunit Hsp60, which function as a back-to-back double ring. Interacts with 2 heptameric Hsp10 rings to form the symmetrical football complex (By similarity). Interacts with HRAS (By similarity). Interacts with ATAD3A. Interacts with ETFBKMT and EEF1AKMT3 (By similarity). Interacts with MFHAS1 (By similarity).</text>
</comment>
<comment type="subcellular location">
    <subcellularLocation>
        <location evidence="2">Mitochondrion matrix</location>
    </subcellularLocation>
</comment>
<comment type="similarity">
    <text evidence="4">Belongs to the chaperonin (HSP60) family.</text>
</comment>
<keyword id="KW-0007">Acetylation</keyword>
<keyword id="KW-0067">ATP-binding</keyword>
<keyword id="KW-0143">Chaperone</keyword>
<keyword id="KW-0413">Isomerase</keyword>
<keyword id="KW-1017">Isopeptide bond</keyword>
<keyword id="KW-0496">Mitochondrion</keyword>
<keyword id="KW-0547">Nucleotide-binding</keyword>
<keyword id="KW-0597">Phosphoprotein</keyword>
<keyword id="KW-0809">Transit peptide</keyword>
<keyword id="KW-0832">Ubl conjugation</keyword>
<dbReference type="EC" id="5.6.1.7" evidence="2"/>
<dbReference type="EMBL" id="M22383">
    <property type="protein sequence ID" value="AAA37001.1"/>
    <property type="molecule type" value="mRNA"/>
</dbReference>
<dbReference type="PIR" id="A34173">
    <property type="entry name" value="A34173"/>
</dbReference>
<dbReference type="RefSeq" id="XP_003504389.1">
    <property type="nucleotide sequence ID" value="XM_003504341.3"/>
</dbReference>
<dbReference type="RefSeq" id="XP_007609539.1">
    <property type="nucleotide sequence ID" value="XM_007611349.2"/>
</dbReference>
<dbReference type="SMR" id="P18687"/>
<dbReference type="PaxDb" id="10029-XP_007609539.1"/>
<dbReference type="Ensembl" id="ENSCGRT00001026904.1">
    <property type="protein sequence ID" value="ENSCGRP00001022659.1"/>
    <property type="gene ID" value="ENSCGRG00001021126.1"/>
</dbReference>
<dbReference type="GeneID" id="100689473"/>
<dbReference type="CTD" id="3329"/>
<dbReference type="eggNOG" id="KOG0356">
    <property type="taxonomic scope" value="Eukaryota"/>
</dbReference>
<dbReference type="GeneTree" id="ENSGT00390000005727"/>
<dbReference type="OMA" id="TDTDKME"/>
<dbReference type="OrthoDB" id="1733909at2759"/>
<dbReference type="Proteomes" id="UP000694386">
    <property type="component" value="Unplaced"/>
</dbReference>
<dbReference type="Proteomes" id="UP001108280">
    <property type="component" value="Unplaced"/>
</dbReference>
<dbReference type="GO" id="GO:0005737">
    <property type="term" value="C:cytoplasm"/>
    <property type="evidence" value="ECO:0000250"/>
    <property type="project" value="UniProtKB"/>
</dbReference>
<dbReference type="GO" id="GO:0140494">
    <property type="term" value="C:migrasome"/>
    <property type="evidence" value="ECO:0007669"/>
    <property type="project" value="Ensembl"/>
</dbReference>
<dbReference type="GO" id="GO:0005759">
    <property type="term" value="C:mitochondrial matrix"/>
    <property type="evidence" value="ECO:0007669"/>
    <property type="project" value="UniProtKB-SubCell"/>
</dbReference>
<dbReference type="GO" id="GO:0032991">
    <property type="term" value="C:protein-containing complex"/>
    <property type="evidence" value="ECO:0000250"/>
    <property type="project" value="UniProtKB"/>
</dbReference>
<dbReference type="GO" id="GO:0030141">
    <property type="term" value="C:secretory granule"/>
    <property type="evidence" value="ECO:0007669"/>
    <property type="project" value="Ensembl"/>
</dbReference>
<dbReference type="GO" id="GO:0097524">
    <property type="term" value="C:sperm plasma membrane"/>
    <property type="evidence" value="ECO:0007669"/>
    <property type="project" value="Ensembl"/>
</dbReference>
<dbReference type="GO" id="GO:0005524">
    <property type="term" value="F:ATP binding"/>
    <property type="evidence" value="ECO:0007669"/>
    <property type="project" value="UniProtKB-KW"/>
</dbReference>
<dbReference type="GO" id="GO:0140662">
    <property type="term" value="F:ATP-dependent protein folding chaperone"/>
    <property type="evidence" value="ECO:0007669"/>
    <property type="project" value="InterPro"/>
</dbReference>
<dbReference type="GO" id="GO:0016853">
    <property type="term" value="F:isomerase activity"/>
    <property type="evidence" value="ECO:0007669"/>
    <property type="project" value="UniProtKB-KW"/>
</dbReference>
<dbReference type="GO" id="GO:0001530">
    <property type="term" value="F:lipopolysaccharide binding"/>
    <property type="evidence" value="ECO:0007669"/>
    <property type="project" value="Ensembl"/>
</dbReference>
<dbReference type="GO" id="GO:0098761">
    <property type="term" value="P:cellular response to interleukin-7"/>
    <property type="evidence" value="ECO:0007669"/>
    <property type="project" value="Ensembl"/>
</dbReference>
<dbReference type="GO" id="GO:0032727">
    <property type="term" value="P:positive regulation of interferon-alpha production"/>
    <property type="evidence" value="ECO:0007669"/>
    <property type="project" value="Ensembl"/>
</dbReference>
<dbReference type="GO" id="GO:0050870">
    <property type="term" value="P:positive regulation of T cell activation"/>
    <property type="evidence" value="ECO:0007669"/>
    <property type="project" value="Ensembl"/>
</dbReference>
<dbReference type="GO" id="GO:0032729">
    <property type="term" value="P:positive regulation of type II interferon production"/>
    <property type="evidence" value="ECO:0007669"/>
    <property type="project" value="Ensembl"/>
</dbReference>
<dbReference type="GO" id="GO:0042026">
    <property type="term" value="P:protein refolding"/>
    <property type="evidence" value="ECO:0007669"/>
    <property type="project" value="InterPro"/>
</dbReference>
<dbReference type="GO" id="GO:0009409">
    <property type="term" value="P:response to cold"/>
    <property type="evidence" value="ECO:0000250"/>
    <property type="project" value="AgBase"/>
</dbReference>
<dbReference type="GO" id="GO:0042110">
    <property type="term" value="P:T cell activation"/>
    <property type="evidence" value="ECO:0007669"/>
    <property type="project" value="Ensembl"/>
</dbReference>
<dbReference type="CDD" id="cd03344">
    <property type="entry name" value="GroEL"/>
    <property type="match status" value="1"/>
</dbReference>
<dbReference type="FunFam" id="3.50.7.10:FF:000001">
    <property type="entry name" value="60 kDa chaperonin"/>
    <property type="match status" value="1"/>
</dbReference>
<dbReference type="FunFam" id="3.30.260.10:FF:000019">
    <property type="entry name" value="60 kDa heat shock mitochondrial"/>
    <property type="match status" value="1"/>
</dbReference>
<dbReference type="FunFam" id="1.10.560.10:FF:000011">
    <property type="entry name" value="60 kDa heat shock protein, mitochondrial"/>
    <property type="match status" value="1"/>
</dbReference>
<dbReference type="FunFam" id="1.10.560.10:FF:000026">
    <property type="entry name" value="Chaperonin 60 subunit alpha 2 chloroplastic"/>
    <property type="match status" value="1"/>
</dbReference>
<dbReference type="FunFam" id="3.30.260.10:FF:000018">
    <property type="entry name" value="Heat shock protein 60"/>
    <property type="match status" value="1"/>
</dbReference>
<dbReference type="Gene3D" id="3.50.7.10">
    <property type="entry name" value="GroEL"/>
    <property type="match status" value="1"/>
</dbReference>
<dbReference type="Gene3D" id="1.10.560.10">
    <property type="entry name" value="GroEL-like equatorial domain"/>
    <property type="match status" value="1"/>
</dbReference>
<dbReference type="Gene3D" id="3.30.260.10">
    <property type="entry name" value="TCP-1-like chaperonin intermediate domain"/>
    <property type="match status" value="1"/>
</dbReference>
<dbReference type="HAMAP" id="MF_00600">
    <property type="entry name" value="CH60"/>
    <property type="match status" value="1"/>
</dbReference>
<dbReference type="InterPro" id="IPR018370">
    <property type="entry name" value="Chaperonin_Cpn60_CS"/>
</dbReference>
<dbReference type="InterPro" id="IPR001844">
    <property type="entry name" value="Cpn60/GroEL"/>
</dbReference>
<dbReference type="InterPro" id="IPR002423">
    <property type="entry name" value="Cpn60/GroEL/TCP-1"/>
</dbReference>
<dbReference type="InterPro" id="IPR027409">
    <property type="entry name" value="GroEL-like_apical_dom_sf"/>
</dbReference>
<dbReference type="InterPro" id="IPR027413">
    <property type="entry name" value="GROEL-like_equatorial_sf"/>
</dbReference>
<dbReference type="InterPro" id="IPR027410">
    <property type="entry name" value="TCP-1-like_intermed_sf"/>
</dbReference>
<dbReference type="NCBIfam" id="TIGR02348">
    <property type="entry name" value="GroEL"/>
    <property type="match status" value="1"/>
</dbReference>
<dbReference type="NCBIfam" id="NF000592">
    <property type="entry name" value="PRK00013.1"/>
    <property type="match status" value="1"/>
</dbReference>
<dbReference type="NCBIfam" id="NF009487">
    <property type="entry name" value="PRK12849.1"/>
    <property type="match status" value="1"/>
</dbReference>
<dbReference type="NCBIfam" id="NF009488">
    <property type="entry name" value="PRK12850.1"/>
    <property type="match status" value="1"/>
</dbReference>
<dbReference type="NCBIfam" id="NF009489">
    <property type="entry name" value="PRK12851.1"/>
    <property type="match status" value="1"/>
</dbReference>
<dbReference type="PANTHER" id="PTHR45633">
    <property type="entry name" value="60 KDA HEAT SHOCK PROTEIN, MITOCHONDRIAL"/>
    <property type="match status" value="1"/>
</dbReference>
<dbReference type="Pfam" id="PF00118">
    <property type="entry name" value="Cpn60_TCP1"/>
    <property type="match status" value="1"/>
</dbReference>
<dbReference type="PRINTS" id="PR00298">
    <property type="entry name" value="CHAPERONIN60"/>
</dbReference>
<dbReference type="SUPFAM" id="SSF52029">
    <property type="entry name" value="GroEL apical domain-like"/>
    <property type="match status" value="1"/>
</dbReference>
<dbReference type="SUPFAM" id="SSF48592">
    <property type="entry name" value="GroEL equatorial domain-like"/>
    <property type="match status" value="1"/>
</dbReference>
<dbReference type="SUPFAM" id="SSF54849">
    <property type="entry name" value="GroEL-intermediate domain like"/>
    <property type="match status" value="1"/>
</dbReference>
<dbReference type="PROSITE" id="PS00296">
    <property type="entry name" value="CHAPERONINS_CPN60"/>
    <property type="match status" value="1"/>
</dbReference>
<proteinExistence type="evidence at transcript level"/>
<gene>
    <name type="primary">HSPD1</name>
    <name type="synonym">HSP60</name>
</gene>
<organism>
    <name type="scientific">Cricetulus griseus</name>
    <name type="common">Chinese hamster</name>
    <name type="synonym">Cricetulus barabensis griseus</name>
    <dbReference type="NCBI Taxonomy" id="10029"/>
    <lineage>
        <taxon>Eukaryota</taxon>
        <taxon>Metazoa</taxon>
        <taxon>Chordata</taxon>
        <taxon>Craniata</taxon>
        <taxon>Vertebrata</taxon>
        <taxon>Euteleostomi</taxon>
        <taxon>Mammalia</taxon>
        <taxon>Eutheria</taxon>
        <taxon>Euarchontoglires</taxon>
        <taxon>Glires</taxon>
        <taxon>Rodentia</taxon>
        <taxon>Myomorpha</taxon>
        <taxon>Muroidea</taxon>
        <taxon>Cricetidae</taxon>
        <taxon>Cricetinae</taxon>
        <taxon>Cricetulus</taxon>
    </lineage>
</organism>
<accession>P18687</accession>
<evidence type="ECO:0000250" key="1"/>
<evidence type="ECO:0000250" key="2">
    <source>
        <dbReference type="UniProtKB" id="P10809"/>
    </source>
</evidence>
<evidence type="ECO:0000250" key="3">
    <source>
        <dbReference type="UniProtKB" id="P63038"/>
    </source>
</evidence>
<evidence type="ECO:0000305" key="4"/>
<name>CH60_CRIGR</name>
<sequence>MLRLPTVLRQMRPVSRALAPHLTRAYAKDVKFGADARALMLQGVDLLADAVAVTMGPKGRTVIIEQSWGSPKVTKDGVTVAKAIDLKDKYKNIGAKLVQDVANNTNEEAGDGTTTATVLARSIAKEGFEKISKGANPVEIRRGVMLAVDAVIAELKKQSKPVTTPEEIAQVATISANGDKDIGNIISDAMKKVGRKGVITVKDGKTLNDELEIIEGMKFDRGYISPYFINTSKGQKCEFQDAYVLLSEKKISSVQSIVPALEIANAHRKPLVIIAEDVDGEALSTLVLNRLKVGLQVVAVKAPGFGDNRKNQLKDMAIATGGAVFGEEGLNLNLEDVQAHDLGKVGEVIVTKDDAMLLKGKGEKAQIEKRIQEITEQLEITTSEYEKEKLNERLAKLSDGVAVLKVGGTSDVEVNEKKDRVTDALNATRAAVEEGIVLGGGCALLRCIPALDSLKPSNEDQKIGIEIIKRALKIPAMTIAKNAGVEGSLIVEKILQSSSEIGYDAMLGDFVNMVEKGIIDPTKVVRTALLDAAGVASLLTTAEAVVTEIPKEEKDPGMGAMGGMGGGMGGGMF</sequence>
<feature type="transit peptide" description="Mitochondrion" evidence="1">
    <location>
        <begin position="1"/>
        <end position="26"/>
    </location>
</feature>
<feature type="chain" id="PRO_0000005025" description="60 kDa heat shock protein, mitochondrial">
    <location>
        <begin position="27"/>
        <end position="573"/>
    </location>
</feature>
<feature type="binding site" evidence="2">
    <location>
        <position position="75"/>
    </location>
    <ligand>
        <name>ATP</name>
        <dbReference type="ChEBI" id="CHEBI:30616"/>
    </ligand>
</feature>
<feature type="binding site" evidence="2">
    <location>
        <begin position="111"/>
        <end position="115"/>
    </location>
    <ligand>
        <name>ATP</name>
        <dbReference type="ChEBI" id="CHEBI:30616"/>
    </ligand>
</feature>
<feature type="binding site" evidence="2">
    <location>
        <position position="440"/>
    </location>
    <ligand>
        <name>ATP</name>
        <dbReference type="ChEBI" id="CHEBI:30616"/>
    </ligand>
</feature>
<feature type="binding site" evidence="2">
    <location>
        <position position="520"/>
    </location>
    <ligand>
        <name>ATP</name>
        <dbReference type="ChEBI" id="CHEBI:30616"/>
    </ligand>
</feature>
<feature type="modified residue" description="N6-succinyllysine" evidence="3">
    <location>
        <position position="31"/>
    </location>
</feature>
<feature type="modified residue" description="Phosphoserine" evidence="2">
    <location>
        <position position="67"/>
    </location>
</feature>
<feature type="modified residue" description="Phosphoserine" evidence="2">
    <location>
        <position position="70"/>
    </location>
</feature>
<feature type="modified residue" description="N6-acetyllysine" evidence="3">
    <location>
        <position position="75"/>
    </location>
</feature>
<feature type="modified residue" description="N6-acetyllysine; alternate" evidence="2">
    <location>
        <position position="82"/>
    </location>
</feature>
<feature type="modified residue" description="N6-succinyllysine; alternate" evidence="3">
    <location>
        <position position="82"/>
    </location>
</feature>
<feature type="modified residue" description="N6-acetyllysine" evidence="3">
    <location>
        <position position="87"/>
    </location>
</feature>
<feature type="modified residue" description="Phosphotyrosine" evidence="2">
    <location>
        <position position="90"/>
    </location>
</feature>
<feature type="modified residue" description="N6-acetyllysine" evidence="3">
    <location>
        <position position="91"/>
    </location>
</feature>
<feature type="modified residue" description="N6-acetyllysine; alternate" evidence="2">
    <location>
        <position position="125"/>
    </location>
</feature>
<feature type="modified residue" description="N6-succinyllysine; alternate" evidence="3">
    <location>
        <position position="125"/>
    </location>
</feature>
<feature type="modified residue" description="N6-acetyllysine" evidence="2">
    <location>
        <position position="130"/>
    </location>
</feature>
<feature type="modified residue" description="N6-acetyllysine; alternate" evidence="3">
    <location>
        <position position="133"/>
    </location>
</feature>
<feature type="modified residue" description="N6-malonyllysine; alternate" evidence="1">
    <location>
        <position position="133"/>
    </location>
</feature>
<feature type="modified residue" description="N6-succinyllysine; alternate" evidence="3">
    <location>
        <position position="133"/>
    </location>
</feature>
<feature type="modified residue" description="N6-acetyllysine" evidence="3">
    <location>
        <position position="156"/>
    </location>
</feature>
<feature type="modified residue" description="N6-acetyllysine; alternate" evidence="3">
    <location>
        <position position="191"/>
    </location>
</feature>
<feature type="modified residue" description="N6-succinyllysine; alternate" evidence="3">
    <location>
        <position position="191"/>
    </location>
</feature>
<feature type="modified residue" description="N6-acetyllysine; alternate" evidence="2">
    <location>
        <position position="202"/>
    </location>
</feature>
<feature type="modified residue" description="N6-succinyllysine; alternate" evidence="3">
    <location>
        <position position="202"/>
    </location>
</feature>
<feature type="modified residue" description="N6-acetyllysine; alternate" evidence="3">
    <location>
        <position position="205"/>
    </location>
</feature>
<feature type="modified residue" description="N6-succinyllysine; alternate" evidence="3">
    <location>
        <position position="205"/>
    </location>
</feature>
<feature type="modified residue" description="N6-acetyllysine; alternate" evidence="2">
    <location>
        <position position="218"/>
    </location>
</feature>
<feature type="modified residue" description="N6-succinyllysine; alternate" evidence="3">
    <location>
        <position position="218"/>
    </location>
</feature>
<feature type="modified residue" description="N6-acetyllysine; alternate" evidence="3">
    <location>
        <position position="236"/>
    </location>
</feature>
<feature type="modified residue" description="N6-succinyllysine; alternate" evidence="3">
    <location>
        <position position="236"/>
    </location>
</feature>
<feature type="modified residue" description="N6-acetyllysine" evidence="3">
    <location>
        <position position="249"/>
    </location>
</feature>
<feature type="modified residue" description="N6-acetyllysine; alternate" evidence="3">
    <location>
        <position position="250"/>
    </location>
</feature>
<feature type="modified residue" description="N6-succinyllysine; alternate" evidence="3">
    <location>
        <position position="250"/>
    </location>
</feature>
<feature type="modified residue" description="N6-acetyllysine" evidence="2">
    <location>
        <position position="269"/>
    </location>
</feature>
<feature type="modified residue" description="N6-acetyllysine" evidence="3">
    <location>
        <position position="292"/>
    </location>
</feature>
<feature type="modified residue" description="N6-succinyllysine" evidence="3">
    <location>
        <position position="301"/>
    </location>
</feature>
<feature type="modified residue" description="N6-acetyllysine" evidence="3">
    <location>
        <position position="314"/>
    </location>
</feature>
<feature type="modified residue" description="N6-acetyllysine; alternate" evidence="2">
    <location>
        <position position="352"/>
    </location>
</feature>
<feature type="modified residue" description="N6-succinyllysine; alternate" evidence="3">
    <location>
        <position position="352"/>
    </location>
</feature>
<feature type="modified residue" description="N6-acetyllysine" evidence="2">
    <location>
        <position position="359"/>
    </location>
</feature>
<feature type="modified residue" description="N6-acetyllysine" evidence="3">
    <location>
        <position position="389"/>
    </location>
</feature>
<feature type="modified residue" description="N6-acetyllysine; alternate" evidence="2">
    <location>
        <position position="396"/>
    </location>
</feature>
<feature type="modified residue" description="N6-succinyllysine; alternate" evidence="3">
    <location>
        <position position="396"/>
    </location>
</feature>
<feature type="modified residue" description="Phosphoserine" evidence="3">
    <location>
        <position position="410"/>
    </location>
</feature>
<feature type="modified residue" description="N6-acetyllysine; alternate" evidence="3">
    <location>
        <position position="455"/>
    </location>
</feature>
<feature type="modified residue" description="N6-succinyllysine; alternate" evidence="3">
    <location>
        <position position="455"/>
    </location>
</feature>
<feature type="modified residue" description="N6-acetyllysine" evidence="2">
    <location>
        <position position="469"/>
    </location>
</feature>
<feature type="modified residue" description="N6-acetyllysine; alternate" evidence="3">
    <location>
        <position position="481"/>
    </location>
</feature>
<feature type="modified residue" description="N6-succinyllysine; alternate" evidence="3">
    <location>
        <position position="481"/>
    </location>
</feature>
<feature type="modified residue" description="Phosphoserine" evidence="2">
    <location>
        <position position="488"/>
    </location>
</feature>
<feature type="cross-link" description="Glycyl lysine isopeptide (Lys-Gly) (interchain with G-Cter in SUMO2)" evidence="2">
    <location>
        <position position="551"/>
    </location>
</feature>